<proteinExistence type="predicted"/>
<evidence type="ECO:0000250" key="1"/>
<evidence type="ECO:0000255" key="2">
    <source>
        <dbReference type="PROSITE-ProRule" id="PRU00393"/>
    </source>
</evidence>
<evidence type="ECO:0000255" key="3">
    <source>
        <dbReference type="PROSITE-ProRule" id="PRU00394"/>
    </source>
</evidence>
<evidence type="ECO:0000256" key="4">
    <source>
        <dbReference type="SAM" id="MobiDB-lite"/>
    </source>
</evidence>
<evidence type="ECO:0000305" key="5"/>
<organism>
    <name type="scientific">Salmonella typhimurium (strain LT2 / SGSC1412 / ATCC 700720)</name>
    <dbReference type="NCBI Taxonomy" id="99287"/>
    <lineage>
        <taxon>Bacteria</taxon>
        <taxon>Pseudomonadati</taxon>
        <taxon>Pseudomonadota</taxon>
        <taxon>Gammaproteobacteria</taxon>
        <taxon>Enterobacterales</taxon>
        <taxon>Enterobacteriaceae</taxon>
        <taxon>Salmonella</taxon>
    </lineage>
</organism>
<accession>P17430</accession>
<reference key="1">
    <citation type="journal article" date="1990" name="Nucleic Acids Res.">
        <title>Sequence analysis of the iclR gene encoding the repressor of the acetate operon in Salmonella typhimurium.</title>
        <authorList>
            <person name="Galinier A."/>
            <person name="Negre D."/>
            <person name="Cortay J.-C."/>
            <person name="Marcandier S."/>
            <person name="Maloy S.R."/>
            <person name="Cozzone A.J."/>
        </authorList>
    </citation>
    <scope>NUCLEOTIDE SEQUENCE [GENOMIC DNA]</scope>
</reference>
<reference key="2">
    <citation type="journal article" date="2001" name="Nature">
        <title>Complete genome sequence of Salmonella enterica serovar Typhimurium LT2.</title>
        <authorList>
            <person name="McClelland M."/>
            <person name="Sanderson K.E."/>
            <person name="Spieth J."/>
            <person name="Clifton S.W."/>
            <person name="Latreille P."/>
            <person name="Courtney L."/>
            <person name="Porwollik S."/>
            <person name="Ali J."/>
            <person name="Dante M."/>
            <person name="Du F."/>
            <person name="Hou S."/>
            <person name="Layman D."/>
            <person name="Leonard S."/>
            <person name="Nguyen C."/>
            <person name="Scott K."/>
            <person name="Holmes A."/>
            <person name="Grewal N."/>
            <person name="Mulvaney E."/>
            <person name="Ryan E."/>
            <person name="Sun H."/>
            <person name="Florea L."/>
            <person name="Miller W."/>
            <person name="Stoneking T."/>
            <person name="Nhan M."/>
            <person name="Waterston R."/>
            <person name="Wilson R.K."/>
        </authorList>
    </citation>
    <scope>NUCLEOTIDE SEQUENCE [LARGE SCALE GENOMIC DNA]</scope>
    <source>
        <strain>LT2 / SGSC1412 / ATCC 700720</strain>
    </source>
</reference>
<sequence>MVAPVPAKRGRKPAATTAPVTGQVQSLTRGLKLLEWIAESNGSVALTELAQQAGLPNSTTHRLLTTMQQQGFVRQVGELGHWAVGAHAFIVGSSFLQSRNLLAIVHPILRKLMEDSGETVNLAVLDQSDHQAIIIDQVQCTQLMRMSAPIGGKLPMHASGAGKAFLSQLSEEQVTSLLHRKGLHAYTHATLVSPLHLKDDLAQTRKRGYSFDDEEHALGLRCVASCIYDEHREPFAALSISGPCSRITDDRVTELGAMVIKAAKEVTLAYGGTR</sequence>
<name>ICLR_SALTY</name>
<feature type="chain" id="PRO_0000201759" description="Acetate operon repressor">
    <location>
        <begin position="1"/>
        <end position="274"/>
    </location>
</feature>
<feature type="domain" description="HTH iclR-type" evidence="2">
    <location>
        <begin position="24"/>
        <end position="86"/>
    </location>
</feature>
<feature type="domain" description="IclR-ED" evidence="3">
    <location>
        <begin position="101"/>
        <end position="272"/>
    </location>
</feature>
<feature type="DNA-binding region" description="H-T-H motif" evidence="2">
    <location>
        <begin position="46"/>
        <end position="65"/>
    </location>
</feature>
<feature type="region of interest" description="Disordered" evidence="4">
    <location>
        <begin position="1"/>
        <end position="21"/>
    </location>
</feature>
<feature type="binding site" evidence="1">
    <location>
        <begin position="160"/>
        <end position="161"/>
    </location>
    <ligand>
        <name>glyoxylate</name>
        <dbReference type="ChEBI" id="CHEBI:36655"/>
    </ligand>
</feature>
<feature type="binding site" evidence="1">
    <location>
        <position position="212"/>
    </location>
    <ligand>
        <name>glyoxylate</name>
        <dbReference type="ChEBI" id="CHEBI:36655"/>
    </ligand>
</feature>
<feature type="binding site" evidence="1">
    <location>
        <position position="222"/>
    </location>
    <ligand>
        <name>glyoxylate</name>
        <dbReference type="ChEBI" id="CHEBI:36655"/>
    </ligand>
</feature>
<feature type="binding site" evidence="1">
    <location>
        <begin position="239"/>
        <end position="241"/>
    </location>
    <ligand>
        <name>glyoxylate</name>
        <dbReference type="ChEBI" id="CHEBI:36655"/>
    </ligand>
</feature>
<feature type="sequence conflict" description="In Ref. 1; CAA37126." evidence="5" ref="1">
    <original>S</original>
    <variation>T</variation>
    <location>
        <position position="43"/>
    </location>
</feature>
<feature type="sequence conflict" description="In Ref. 1; CAA37126." evidence="5" ref="1">
    <original>T</original>
    <variation>S</variation>
    <location>
        <position position="59"/>
    </location>
</feature>
<feature type="sequence conflict" description="In Ref. 1; CAA37126." evidence="5" ref="1">
    <original>A</original>
    <variation>P</variation>
    <location>
        <position position="86"/>
    </location>
</feature>
<feature type="sequence conflict" description="In Ref. 1; CAA37126." evidence="5" ref="1">
    <original>GKLPMH</original>
    <variation>ASCPMP</variation>
    <location>
        <begin position="152"/>
        <end position="157"/>
    </location>
</feature>
<feature type="sequence conflict" description="In Ref. 1; CAA37126." evidence="5" ref="1">
    <original>R</original>
    <variation>A</variation>
    <location>
        <position position="205"/>
    </location>
</feature>
<feature type="sequence conflict" description="In Ref. 1; CAA37126." evidence="5" ref="1">
    <original>C</original>
    <variation>R</variation>
    <location>
        <position position="244"/>
    </location>
</feature>
<protein>
    <recommendedName>
        <fullName>Acetate operon repressor</fullName>
    </recommendedName>
</protein>
<comment type="function">
    <text>Regulation of the glyoxylate bypass operon, which encodes isocitrate lyase, malate synthase as well as isocitrate dehydrogenase kinase/phosphorylase.</text>
</comment>
<dbReference type="EMBL" id="X52950">
    <property type="protein sequence ID" value="CAA37126.1"/>
    <property type="molecule type" value="Genomic_DNA"/>
</dbReference>
<dbReference type="EMBL" id="AE006468">
    <property type="protein sequence ID" value="AAL23011.1"/>
    <property type="molecule type" value="Genomic_DNA"/>
</dbReference>
<dbReference type="PIR" id="S12729">
    <property type="entry name" value="S12729"/>
</dbReference>
<dbReference type="RefSeq" id="NP_463052.1">
    <property type="nucleotide sequence ID" value="NC_003197.2"/>
</dbReference>
<dbReference type="RefSeq" id="WP_000226434.1">
    <property type="nucleotide sequence ID" value="NC_003197.2"/>
</dbReference>
<dbReference type="SMR" id="P17430"/>
<dbReference type="STRING" id="99287.STM4187"/>
<dbReference type="PaxDb" id="99287-STM4187"/>
<dbReference type="GeneID" id="1255713"/>
<dbReference type="KEGG" id="stm:STM4187"/>
<dbReference type="PATRIC" id="fig|99287.12.peg.4400"/>
<dbReference type="HOGENOM" id="CLU_062618_7_1_6"/>
<dbReference type="OMA" id="NALMRMS"/>
<dbReference type="PhylomeDB" id="P17430"/>
<dbReference type="BioCyc" id="SENT99287:STM4187-MONOMER"/>
<dbReference type="Proteomes" id="UP000001014">
    <property type="component" value="Chromosome"/>
</dbReference>
<dbReference type="GO" id="GO:0003677">
    <property type="term" value="F:DNA binding"/>
    <property type="evidence" value="ECO:0000318"/>
    <property type="project" value="GO_Central"/>
</dbReference>
<dbReference type="GO" id="GO:0003700">
    <property type="term" value="F:DNA-binding transcription factor activity"/>
    <property type="evidence" value="ECO:0000318"/>
    <property type="project" value="GO_Central"/>
</dbReference>
<dbReference type="GO" id="GO:0006097">
    <property type="term" value="P:glyoxylate cycle"/>
    <property type="evidence" value="ECO:0007669"/>
    <property type="project" value="UniProtKB-KW"/>
</dbReference>
<dbReference type="GO" id="GO:0045892">
    <property type="term" value="P:negative regulation of DNA-templated transcription"/>
    <property type="evidence" value="ECO:0000318"/>
    <property type="project" value="GO_Central"/>
</dbReference>
<dbReference type="FunFam" id="1.10.10.10:FF:000155">
    <property type="entry name" value="Acetate operon repressor IclR"/>
    <property type="match status" value="1"/>
</dbReference>
<dbReference type="FunFam" id="3.30.450.40:FF:000020">
    <property type="entry name" value="Acetate operon transcriptional repressor IclR"/>
    <property type="match status" value="1"/>
</dbReference>
<dbReference type="Gene3D" id="3.30.450.40">
    <property type="match status" value="1"/>
</dbReference>
<dbReference type="Gene3D" id="1.10.10.10">
    <property type="entry name" value="Winged helix-like DNA-binding domain superfamily/Winged helix DNA-binding domain"/>
    <property type="match status" value="1"/>
</dbReference>
<dbReference type="InterPro" id="IPR029016">
    <property type="entry name" value="GAF-like_dom_sf"/>
</dbReference>
<dbReference type="InterPro" id="IPR050707">
    <property type="entry name" value="HTH_MetabolicPath_Reg"/>
</dbReference>
<dbReference type="InterPro" id="IPR014757">
    <property type="entry name" value="Tscrpt_reg_IclR_C"/>
</dbReference>
<dbReference type="InterPro" id="IPR005471">
    <property type="entry name" value="Tscrpt_reg_IclR_N"/>
</dbReference>
<dbReference type="InterPro" id="IPR036388">
    <property type="entry name" value="WH-like_DNA-bd_sf"/>
</dbReference>
<dbReference type="InterPro" id="IPR036390">
    <property type="entry name" value="WH_DNA-bd_sf"/>
</dbReference>
<dbReference type="NCBIfam" id="NF008601">
    <property type="entry name" value="PRK11569.1"/>
    <property type="match status" value="1"/>
</dbReference>
<dbReference type="PANTHER" id="PTHR30136">
    <property type="entry name" value="HELIX-TURN-HELIX TRANSCRIPTIONAL REGULATOR, ICLR FAMILY"/>
    <property type="match status" value="1"/>
</dbReference>
<dbReference type="PANTHER" id="PTHR30136:SF22">
    <property type="entry name" value="TRANSCRIPTIONAL REPRESSOR ICLR"/>
    <property type="match status" value="1"/>
</dbReference>
<dbReference type="Pfam" id="PF09339">
    <property type="entry name" value="HTH_IclR"/>
    <property type="match status" value="1"/>
</dbReference>
<dbReference type="Pfam" id="PF01614">
    <property type="entry name" value="IclR_C"/>
    <property type="match status" value="1"/>
</dbReference>
<dbReference type="SMART" id="SM00346">
    <property type="entry name" value="HTH_ICLR"/>
    <property type="match status" value="1"/>
</dbReference>
<dbReference type="SUPFAM" id="SSF55781">
    <property type="entry name" value="GAF domain-like"/>
    <property type="match status" value="1"/>
</dbReference>
<dbReference type="SUPFAM" id="SSF46785">
    <property type="entry name" value="Winged helix' DNA-binding domain"/>
    <property type="match status" value="1"/>
</dbReference>
<dbReference type="PROSITE" id="PS51077">
    <property type="entry name" value="HTH_ICLR"/>
    <property type="match status" value="1"/>
</dbReference>
<dbReference type="PROSITE" id="PS51078">
    <property type="entry name" value="ICLR_ED"/>
    <property type="match status" value="1"/>
</dbReference>
<keyword id="KW-0238">DNA-binding</keyword>
<keyword id="KW-0329">Glyoxylate bypass</keyword>
<keyword id="KW-1185">Reference proteome</keyword>
<keyword id="KW-0678">Repressor</keyword>
<keyword id="KW-0804">Transcription</keyword>
<keyword id="KW-0805">Transcription regulation</keyword>
<gene>
    <name type="primary">iclR</name>
    <name type="ordered locus">STM4187</name>
</gene>